<reference key="1">
    <citation type="submission" date="2007-04" db="EMBL/GenBank/DDBJ databases">
        <title>Complete sequence of chromosome of Rhodobacter sphaeroides ATCC 17025.</title>
        <authorList>
            <consortium name="US DOE Joint Genome Institute"/>
            <person name="Copeland A."/>
            <person name="Lucas S."/>
            <person name="Lapidus A."/>
            <person name="Barry K."/>
            <person name="Detter J.C."/>
            <person name="Glavina del Rio T."/>
            <person name="Hammon N."/>
            <person name="Israni S."/>
            <person name="Dalin E."/>
            <person name="Tice H."/>
            <person name="Pitluck S."/>
            <person name="Chertkov O."/>
            <person name="Brettin T."/>
            <person name="Bruce D."/>
            <person name="Han C."/>
            <person name="Schmutz J."/>
            <person name="Larimer F."/>
            <person name="Land M."/>
            <person name="Hauser L."/>
            <person name="Kyrpides N."/>
            <person name="Kim E."/>
            <person name="Richardson P."/>
            <person name="Mackenzie C."/>
            <person name="Choudhary M."/>
            <person name="Donohue T.J."/>
            <person name="Kaplan S."/>
        </authorList>
    </citation>
    <scope>NUCLEOTIDE SEQUENCE [LARGE SCALE GENOMIC DNA]</scope>
    <source>
        <strain>ATCC 17025 / ATH 2.4.3</strain>
    </source>
</reference>
<sequence>MSDLVAKTAIDRRLADIVTPVIEGMGFELVRLRLMSGKTRTLQIMADRPDGGIVVDECADISTAVSAVLDVEDPIEDNYTLEVSSPGIDRPLTRLKDFDAWAGYEARIETAELIDGRRRFKGELAGTEGDEVLITIEDGKEGFVTIGLKFDWLSDAKLILTDELIAEMLRQKKASGNFDESQFDEIQETEGEEADEAETPITRH</sequence>
<keyword id="KW-0963">Cytoplasm</keyword>
<keyword id="KW-0690">Ribosome biogenesis</keyword>
<name>RIMP_CERS5</name>
<accession>A4WW77</accession>
<organism>
    <name type="scientific">Cereibacter sphaeroides (strain ATCC 17025 / ATH 2.4.3)</name>
    <name type="common">Rhodobacter sphaeroides</name>
    <dbReference type="NCBI Taxonomy" id="349102"/>
    <lineage>
        <taxon>Bacteria</taxon>
        <taxon>Pseudomonadati</taxon>
        <taxon>Pseudomonadota</taxon>
        <taxon>Alphaproteobacteria</taxon>
        <taxon>Rhodobacterales</taxon>
        <taxon>Paracoccaceae</taxon>
        <taxon>Cereibacter</taxon>
    </lineage>
</organism>
<evidence type="ECO:0000255" key="1">
    <source>
        <dbReference type="HAMAP-Rule" id="MF_01077"/>
    </source>
</evidence>
<evidence type="ECO:0000256" key="2">
    <source>
        <dbReference type="SAM" id="MobiDB-lite"/>
    </source>
</evidence>
<dbReference type="EMBL" id="CP000661">
    <property type="protein sequence ID" value="ABP71641.1"/>
    <property type="molecule type" value="Genomic_DNA"/>
</dbReference>
<dbReference type="SMR" id="A4WW77"/>
<dbReference type="STRING" id="349102.Rsph17025_2754"/>
<dbReference type="KEGG" id="rsq:Rsph17025_2754"/>
<dbReference type="eggNOG" id="COG0779">
    <property type="taxonomic scope" value="Bacteria"/>
</dbReference>
<dbReference type="HOGENOM" id="CLU_070525_0_1_5"/>
<dbReference type="BioCyc" id="RSPH349102:G1G8M-2834-MONOMER"/>
<dbReference type="GO" id="GO:0005829">
    <property type="term" value="C:cytosol"/>
    <property type="evidence" value="ECO:0007669"/>
    <property type="project" value="TreeGrafter"/>
</dbReference>
<dbReference type="GO" id="GO:0000028">
    <property type="term" value="P:ribosomal small subunit assembly"/>
    <property type="evidence" value="ECO:0007669"/>
    <property type="project" value="TreeGrafter"/>
</dbReference>
<dbReference type="GO" id="GO:0006412">
    <property type="term" value="P:translation"/>
    <property type="evidence" value="ECO:0007669"/>
    <property type="project" value="TreeGrafter"/>
</dbReference>
<dbReference type="CDD" id="cd01734">
    <property type="entry name" value="YlxS_C"/>
    <property type="match status" value="1"/>
</dbReference>
<dbReference type="FunFam" id="3.30.300.70:FF:000001">
    <property type="entry name" value="Ribosome maturation factor RimP"/>
    <property type="match status" value="1"/>
</dbReference>
<dbReference type="Gene3D" id="2.30.30.180">
    <property type="entry name" value="Ribosome maturation factor RimP, C-terminal domain"/>
    <property type="match status" value="1"/>
</dbReference>
<dbReference type="Gene3D" id="3.30.300.70">
    <property type="entry name" value="RimP-like superfamily, N-terminal"/>
    <property type="match status" value="1"/>
</dbReference>
<dbReference type="HAMAP" id="MF_01077">
    <property type="entry name" value="RimP"/>
    <property type="match status" value="1"/>
</dbReference>
<dbReference type="InterPro" id="IPR003728">
    <property type="entry name" value="Ribosome_maturation_RimP"/>
</dbReference>
<dbReference type="InterPro" id="IPR028998">
    <property type="entry name" value="RimP_C"/>
</dbReference>
<dbReference type="InterPro" id="IPR036847">
    <property type="entry name" value="RimP_C_sf"/>
</dbReference>
<dbReference type="InterPro" id="IPR028989">
    <property type="entry name" value="RimP_N"/>
</dbReference>
<dbReference type="InterPro" id="IPR035956">
    <property type="entry name" value="RimP_N_sf"/>
</dbReference>
<dbReference type="NCBIfam" id="NF000932">
    <property type="entry name" value="PRK00092.2-5"/>
    <property type="match status" value="1"/>
</dbReference>
<dbReference type="PANTHER" id="PTHR33867">
    <property type="entry name" value="RIBOSOME MATURATION FACTOR RIMP"/>
    <property type="match status" value="1"/>
</dbReference>
<dbReference type="PANTHER" id="PTHR33867:SF1">
    <property type="entry name" value="RIBOSOME MATURATION FACTOR RIMP"/>
    <property type="match status" value="1"/>
</dbReference>
<dbReference type="Pfam" id="PF17384">
    <property type="entry name" value="DUF150_C"/>
    <property type="match status" value="1"/>
</dbReference>
<dbReference type="Pfam" id="PF02576">
    <property type="entry name" value="RimP_N"/>
    <property type="match status" value="1"/>
</dbReference>
<dbReference type="SUPFAM" id="SSF74942">
    <property type="entry name" value="YhbC-like, C-terminal domain"/>
    <property type="match status" value="1"/>
</dbReference>
<dbReference type="SUPFAM" id="SSF75420">
    <property type="entry name" value="YhbC-like, N-terminal domain"/>
    <property type="match status" value="1"/>
</dbReference>
<gene>
    <name evidence="1" type="primary">rimP</name>
    <name type="ordered locus">Rsph17025_2754</name>
</gene>
<proteinExistence type="inferred from homology"/>
<comment type="function">
    <text evidence="1">Required for maturation of 30S ribosomal subunits.</text>
</comment>
<comment type="subcellular location">
    <subcellularLocation>
        <location evidence="1">Cytoplasm</location>
    </subcellularLocation>
</comment>
<comment type="similarity">
    <text evidence="1">Belongs to the RimP family.</text>
</comment>
<feature type="chain" id="PRO_1000064757" description="Ribosome maturation factor RimP">
    <location>
        <begin position="1"/>
        <end position="204"/>
    </location>
</feature>
<feature type="region of interest" description="Disordered" evidence="2">
    <location>
        <begin position="177"/>
        <end position="204"/>
    </location>
</feature>
<feature type="compositionally biased region" description="Acidic residues" evidence="2">
    <location>
        <begin position="181"/>
        <end position="198"/>
    </location>
</feature>
<protein>
    <recommendedName>
        <fullName evidence="1">Ribosome maturation factor RimP</fullName>
    </recommendedName>
</protein>